<protein>
    <recommendedName>
        <fullName evidence="7">Phosphatidylinositol 4-kinase alpha 1</fullName>
        <shortName>PI4-kinase alpha 1ao</shortName>
        <shortName evidence="7">PtdIns-4-kinase alpha 1</shortName>
        <ecNumber evidence="4">2.7.1.67</ecNumber>
    </recommendedName>
    <alternativeName>
        <fullName evidence="9">Phosphatidylinositol 4-OH kinase alpha1</fullName>
        <shortName evidence="7">AtPI4Kalpha1</shortName>
        <shortName evidence="9">PI-4Kalpha1</shortName>
    </alternativeName>
</protein>
<name>P4KA1_ARATH</name>
<sequence length="2028" mass="224017">MEALTELCDIIAKNPKQFSEKLAWICGRCPQTEWLLAESPRVSRSHLNAVLAVARIISKNPESIDNRAKSVVNEFLSAIPASFRRSFWPHSFPSQLISSFYCDFLSYLSCAADLSPEFGTEVARFTGEVVIAAIAPSSGDSDGDPAISKAFLVALSQHFPSILQSDGDKLITMLLDQFVLNRAPASPKEQRQQNSANSETDTSSSQGSPISTNRYPSGKTEMASPGDEVASHGSNLSSKSSSSVVMNGGSIVWKSGVDQLSFGFSEGSGGANPVFRQQVASFEDESIESLEKQEIAFRLITHILDKVKIDSKLQDQVRFIAKRQLQSMSAFLKSRKRDWNEQGQVLKTRVNAKLSVYQAAAKMKIKSLVSLETDGKTSKRLVLETLALLLDAADACLTSVWRKMKACEELFDSLLSGIAKIAVARGGQPLRVLLIRLKPLVLAVCALPDQGAMLESIFKTSCVIIESAWAKDRAPVDNFIMGLASSIRERNDYEEQVDREKQVPAVQLNVIRLLADLNVAVKKPEVADMILPLFIESLEEGDASTPSFLRLQLLDAVSRIATLGFDKSYRETVVLMTRSYLSKLSSVGSVESKTSAPEATTERVETLPAGFLTIASGLMDTKLRSDYRHRLLSLCSDVGLAAESKSGGSGVDFLGPLLPAVAEICSDFDPTMDVEPSLLKLFRNLWFYIALFGLAPPIVKTPTPPLKSTSNSVNSVGSMSATALQAVGGPYMWDNQWALAVQRIAQGTPPLVVSSVKWLEDELELNALHNPGSRRGNGNEKVASTQRLALSTALGGRVDVAAMNTISGVKATYLLAVAFLEIIRFISNGGILNGESSVSASRSAFSCVFEYLKTPNLTPAVSQCLTAIVHRAFETAVSWLEDRISLTGKDARNRELTTYAHACFLIKSMSQRDEHVRDISVNLLTQLRDKFPQVLWHSSCLDSLLFSVHDNTPSTVVNDPAWTAAVRSLYQKVVREWIIISLSYAPCTSQGLLQDKLCKANTWQRAQTTTDVVSLLSEIKIGTGKNELWSGIRTANIPAVMAAAAAASGANLKVSEAFNLEVLGTGVVSATVKCNHAGEIAGMRRLYNSIGGFQSGSTPSGFGGGLQRLISGAFSQAPQPEDDSFNEMLIARFVRLLQQFVNTAEKGGEVEKSQFRETCSQATALLLSNLGGESKTNVEGFSQLLRLLCWCPAYISTPDAMETGIFIWTWLVSAAPQLVSLVLAELVDAWIWTIDTKRGLFASDVRYSGPAAKLRPHLSPGEPEDPPESDPVDQIVAHRLWLGFLIDRFEVVRHNSAEQLLLLGRMLQRSTDLEWCFTRHPAAAGTFFSLMLLGLKFCSCQTQGNMQKFRSGLQLLEDRIYRTSLGWFAHQPEWYDVNIPNFCHSEALSVSVFVHFLSNELSESSQSDSKGKPRESGNLIDVTDQYHPVWGEMDNYTLGKEKRKQLLLMLCQHEADRLDVWAQPISSKDSPYSRLKISSEKWTEYAKTAFSVDPRIALSVASRFPANASVKSEVTQLVQTNIVDLRTIPEALPYFVTPKNVEENSVLLQQLPHWAACSITQALEFLTPAYKGHPRVMAYVLRVLESYPPERVTFFMPQLVQSLRYDDGRLVEGYLLRATQRSDIFAHILIWHLQGEDVQETPKDGSIDKNAAFQEILPQVRQHIIDGFSPNALDMFTREFDFFDKVTSISGVLFPLPKEERRAGIRRELEKIEMQGDDLYLPTAPNKLVRGIRVDSGIPLQSAAKVPIMITFNVIDRDGDHSDVKPQACIFKVGDDCRQDVLALQVISLLRDIFQAAGLNLYLFPYGVLPTGAERGIIEVVPNTRSRSQMGETTDGGLYEIFQQDYGPVGSTTFETARENFLISSAGYAVASLLLQPKDRHNGNLLFDDVGRLVHIDFGFILETSPGGNMRFESAHFKLSHEMTQLLDPSGVMKSKTWHQFVSLCVKGYLAARRQMDGIISTVQMMLESGLPCFSRGDPIGNLRKRFHPEMSEREAAHFMIHVCTDAYNKWTTAGYDLIQYLQQGIEK</sequence>
<organism>
    <name type="scientific">Arabidopsis thaliana</name>
    <name type="common">Mouse-ear cress</name>
    <dbReference type="NCBI Taxonomy" id="3702"/>
    <lineage>
        <taxon>Eukaryota</taxon>
        <taxon>Viridiplantae</taxon>
        <taxon>Streptophyta</taxon>
        <taxon>Embryophyta</taxon>
        <taxon>Tracheophyta</taxon>
        <taxon>Spermatophyta</taxon>
        <taxon>Magnoliopsida</taxon>
        <taxon>eudicotyledons</taxon>
        <taxon>Gunneridae</taxon>
        <taxon>Pentapetalae</taxon>
        <taxon>rosids</taxon>
        <taxon>malvids</taxon>
        <taxon>Brassicales</taxon>
        <taxon>Brassicaceae</taxon>
        <taxon>Camelineae</taxon>
        <taxon>Arabidopsis</taxon>
    </lineage>
</organism>
<reference key="1">
    <citation type="journal article" date="1998" name="J. Biol. Chem.">
        <title>A phosphatidylinositol 4-kinase pleckstrin homology domain that binds phosphatidylinositol 4-monophosphate.</title>
        <authorList>
            <person name="Stevenson J.M."/>
            <person name="Perera I.Y."/>
            <person name="Boss W.F."/>
        </authorList>
    </citation>
    <scope>NUCLEOTIDE SEQUENCE [MRNA]</scope>
    <scope>FUNCTION</scope>
    <scope>TISSUE SPECIFICITY</scope>
    <scope>PH DOMAIN</scope>
    <source>
        <strain>cv. Columbia</strain>
    </source>
</reference>
<reference key="2">
    <citation type="journal article" date="2000" name="Nature">
        <title>Sequence and analysis of chromosome 1 of the plant Arabidopsis thaliana.</title>
        <authorList>
            <person name="Theologis A."/>
            <person name="Ecker J.R."/>
            <person name="Palm C.J."/>
            <person name="Federspiel N.A."/>
            <person name="Kaul S."/>
            <person name="White O."/>
            <person name="Alonso J."/>
            <person name="Altafi H."/>
            <person name="Araujo R."/>
            <person name="Bowman C.L."/>
            <person name="Brooks S.Y."/>
            <person name="Buehler E."/>
            <person name="Chan A."/>
            <person name="Chao Q."/>
            <person name="Chen H."/>
            <person name="Cheuk R.F."/>
            <person name="Chin C.W."/>
            <person name="Chung M.K."/>
            <person name="Conn L."/>
            <person name="Conway A.B."/>
            <person name="Conway A.R."/>
            <person name="Creasy T.H."/>
            <person name="Dewar K."/>
            <person name="Dunn P."/>
            <person name="Etgu P."/>
            <person name="Feldblyum T.V."/>
            <person name="Feng J.-D."/>
            <person name="Fong B."/>
            <person name="Fujii C.Y."/>
            <person name="Gill J.E."/>
            <person name="Goldsmith A.D."/>
            <person name="Haas B."/>
            <person name="Hansen N.F."/>
            <person name="Hughes B."/>
            <person name="Huizar L."/>
            <person name="Hunter J.L."/>
            <person name="Jenkins J."/>
            <person name="Johnson-Hopson C."/>
            <person name="Khan S."/>
            <person name="Khaykin E."/>
            <person name="Kim C.J."/>
            <person name="Koo H.L."/>
            <person name="Kremenetskaia I."/>
            <person name="Kurtz D.B."/>
            <person name="Kwan A."/>
            <person name="Lam B."/>
            <person name="Langin-Hooper S."/>
            <person name="Lee A."/>
            <person name="Lee J.M."/>
            <person name="Lenz C.A."/>
            <person name="Li J.H."/>
            <person name="Li Y.-P."/>
            <person name="Lin X."/>
            <person name="Liu S.X."/>
            <person name="Liu Z.A."/>
            <person name="Luros J.S."/>
            <person name="Maiti R."/>
            <person name="Marziali A."/>
            <person name="Militscher J."/>
            <person name="Miranda M."/>
            <person name="Nguyen M."/>
            <person name="Nierman W.C."/>
            <person name="Osborne B.I."/>
            <person name="Pai G."/>
            <person name="Peterson J."/>
            <person name="Pham P.K."/>
            <person name="Rizzo M."/>
            <person name="Rooney T."/>
            <person name="Rowley D."/>
            <person name="Sakano H."/>
            <person name="Salzberg S.L."/>
            <person name="Schwartz J.R."/>
            <person name="Shinn P."/>
            <person name="Southwick A.M."/>
            <person name="Sun H."/>
            <person name="Tallon L.J."/>
            <person name="Tambunga G."/>
            <person name="Toriumi M.J."/>
            <person name="Town C.D."/>
            <person name="Utterback T."/>
            <person name="Van Aken S."/>
            <person name="Vaysberg M."/>
            <person name="Vysotskaia V.S."/>
            <person name="Walker M."/>
            <person name="Wu D."/>
            <person name="Yu G."/>
            <person name="Fraser C.M."/>
            <person name="Venter J.C."/>
            <person name="Davis R.W."/>
        </authorList>
    </citation>
    <scope>NUCLEOTIDE SEQUENCE [LARGE SCALE GENOMIC DNA]</scope>
    <source>
        <strain>cv. Columbia</strain>
    </source>
</reference>
<reference key="3">
    <citation type="journal article" date="2017" name="Plant J.">
        <title>Araport11: a complete reannotation of the Arabidopsis thaliana reference genome.</title>
        <authorList>
            <person name="Cheng C.Y."/>
            <person name="Krishnakumar V."/>
            <person name="Chan A.P."/>
            <person name="Thibaud-Nissen F."/>
            <person name="Schobel S."/>
            <person name="Town C.D."/>
        </authorList>
    </citation>
    <scope>GENOME REANNOTATION</scope>
    <source>
        <strain>cv. Columbia</strain>
    </source>
</reference>
<reference key="4">
    <citation type="journal article" date="2002" name="Plant Physiol.">
        <title>Inositol phospholipid metabolism in Arabidopsis. Characterized and putative isoforms of inositol phospholipid kinase and phosphoinositide-specific phospholipase C.</title>
        <authorList>
            <person name="Mueller-Roeber B."/>
            <person name="Pical C."/>
        </authorList>
    </citation>
    <scope>GENE FAMILY</scope>
    <scope>NOMENCLATURE</scope>
</reference>
<reference key="5">
    <citation type="journal article" date="2003" name="Plant Physiol.">
        <title>Differential regulation of two Arabidopsis type III phosphatidylinositol 4-kinase isoforms. A regulatory role for the pleckstrin homology domain.</title>
        <authorList>
            <person name="Stevenson-Paulik J."/>
            <person name="Love J."/>
            <person name="Boss W.F."/>
        </authorList>
    </citation>
    <scope>CATALYTIC ACTIVITY</scope>
    <scope>ACTIVITY REGULATION</scope>
    <scope>SUBCELLULAR LOCATION</scope>
    <scope>PH DOMAIN</scope>
    <scope>INTERACTION WITH ACTIN FILAMENTS</scope>
</reference>
<reference key="6">
    <citation type="journal article" date="2012" name="Plant Cell Physiol.">
        <title>Arabidopsis type-III phosphatidylinositol 4-kinases beta1 and beta2 are upstream of the phospholipase C pathway triggered by cold exposure.</title>
        <authorList>
            <person name="Delage E."/>
            <person name="Ruelland E."/>
            <person name="Guillas I."/>
            <person name="Zachowski A."/>
            <person name="Puyaubert J."/>
        </authorList>
    </citation>
    <scope>DISRUPTION PHENOTYPE</scope>
    <scope>FUNCTION</scope>
</reference>
<reference key="7">
    <citation type="journal article" date="2012" name="Plant Signal. Behav.">
        <title>Eat in or take away? How phosphatidylinositol 4-kinases feed the phospholipase C pathway with substrate.</title>
        <authorList>
            <person name="Delage E."/>
            <person name="Ruelland E."/>
            <person name="Zachowski A."/>
            <person name="Puyaubert J."/>
        </authorList>
    </citation>
    <scope>REVIEW</scope>
</reference>
<feature type="chain" id="PRO_0000398592" description="Phosphatidylinositol 4-kinase alpha 1">
    <location>
        <begin position="1"/>
        <end position="2028"/>
    </location>
</feature>
<feature type="domain" description="PIK helical" evidence="2">
    <location>
        <begin position="1483"/>
        <end position="1659"/>
    </location>
</feature>
<feature type="domain" description="PI3K/PI4K catalytic" evidence="1">
    <location>
        <begin position="1734"/>
        <end position="2012"/>
    </location>
</feature>
<feature type="region of interest" description="Disordered" evidence="3">
    <location>
        <begin position="184"/>
        <end position="241"/>
    </location>
</feature>
<feature type="region of interest" description="Pleckstrin homology (PH) domain conferring phosphoinositide binding specificity" evidence="10">
    <location>
        <begin position="1660"/>
        <end position="1773"/>
    </location>
</feature>
<feature type="region of interest" description="G-loop" evidence="1">
    <location>
        <begin position="1740"/>
        <end position="1746"/>
    </location>
</feature>
<feature type="region of interest" description="Catalytic loop" evidence="1">
    <location>
        <begin position="1876"/>
        <end position="1884"/>
    </location>
</feature>
<feature type="region of interest" description="Activation loop" evidence="1">
    <location>
        <begin position="1895"/>
        <end position="1920"/>
    </location>
</feature>
<feature type="compositionally biased region" description="Polar residues" evidence="3">
    <location>
        <begin position="192"/>
        <end position="215"/>
    </location>
</feature>
<feature type="compositionally biased region" description="Low complexity" evidence="3">
    <location>
        <begin position="231"/>
        <end position="241"/>
    </location>
</feature>
<feature type="sequence conflict" description="In Ref. 1; AAC32803." evidence="9" ref="1">
    <original>V</original>
    <variation>E</variation>
    <location>
        <position position="463"/>
    </location>
</feature>
<feature type="sequence conflict" description="In Ref. 1; AAC32803." evidence="9" ref="1">
    <original>E</original>
    <variation>G</variation>
    <location>
        <position position="1290"/>
    </location>
</feature>
<accession>Q9SXA1</accession>
<accession>O81129</accession>
<dbReference type="EC" id="2.7.1.67" evidence="4"/>
<dbReference type="EMBL" id="AF035936">
    <property type="protein sequence ID" value="AAC32803.2"/>
    <property type="molecule type" value="mRNA"/>
</dbReference>
<dbReference type="EMBL" id="AC007504">
    <property type="protein sequence ID" value="AAD43164.1"/>
    <property type="status" value="ALT_SEQ"/>
    <property type="molecule type" value="Genomic_DNA"/>
</dbReference>
<dbReference type="EMBL" id="CP002684">
    <property type="protein sequence ID" value="AEE32419.1"/>
    <property type="molecule type" value="Genomic_DNA"/>
</dbReference>
<dbReference type="EMBL" id="CP002684">
    <property type="protein sequence ID" value="AEE32420.1"/>
    <property type="molecule type" value="Genomic_DNA"/>
</dbReference>
<dbReference type="PIR" id="F96529">
    <property type="entry name" value="F96529"/>
</dbReference>
<dbReference type="PIR" id="T52022">
    <property type="entry name" value="T52022"/>
</dbReference>
<dbReference type="SMR" id="Q9SXA1"/>
<dbReference type="FunCoup" id="Q9SXA1">
    <property type="interactions" value="3938"/>
</dbReference>
<dbReference type="STRING" id="3702.Q9SXA1"/>
<dbReference type="GlyGen" id="Q9SXA1">
    <property type="glycosylation" value="4 sites"/>
</dbReference>
<dbReference type="iPTMnet" id="Q9SXA1"/>
<dbReference type="PaxDb" id="3702-AT1G49340.2"/>
<dbReference type="ProteomicsDB" id="251360"/>
<dbReference type="EnsemblPlants" id="AT1G49340.1">
    <property type="protein sequence ID" value="AT1G49340.1"/>
    <property type="gene ID" value="AT1G49340"/>
</dbReference>
<dbReference type="EnsemblPlants" id="AT1G49340.2">
    <property type="protein sequence ID" value="AT1G49340.2"/>
    <property type="gene ID" value="AT1G49340"/>
</dbReference>
<dbReference type="Gramene" id="AT1G49340.1">
    <property type="protein sequence ID" value="AT1G49340.1"/>
    <property type="gene ID" value="AT1G49340"/>
</dbReference>
<dbReference type="Gramene" id="AT1G49340.2">
    <property type="protein sequence ID" value="AT1G49340.2"/>
    <property type="gene ID" value="AT1G49340"/>
</dbReference>
<dbReference type="KEGG" id="ath:AT1G49340"/>
<dbReference type="Araport" id="AT1G49340"/>
<dbReference type="TAIR" id="AT1G49340">
    <property type="gene designation" value="ATPI4K ALPHA"/>
</dbReference>
<dbReference type="eggNOG" id="KOG0902">
    <property type="taxonomic scope" value="Eukaryota"/>
</dbReference>
<dbReference type="HOGENOM" id="CLU_000893_2_1_1"/>
<dbReference type="InParanoid" id="Q9SXA1"/>
<dbReference type="OMA" id="MSQRDEN"/>
<dbReference type="PhylomeDB" id="Q9SXA1"/>
<dbReference type="BioCyc" id="ARA:AT1G49340-MONOMER"/>
<dbReference type="PRO" id="PR:Q9SXA1"/>
<dbReference type="Proteomes" id="UP000006548">
    <property type="component" value="Chromosome 1"/>
</dbReference>
<dbReference type="ExpressionAtlas" id="Q9SXA1">
    <property type="expression patterns" value="baseline and differential"/>
</dbReference>
<dbReference type="GO" id="GO:0031234">
    <property type="term" value="C:extrinsic component of cytoplasmic side of plasma membrane"/>
    <property type="evidence" value="ECO:0000314"/>
    <property type="project" value="TAIR"/>
</dbReference>
<dbReference type="GO" id="GO:0098857">
    <property type="term" value="C:membrane microdomain"/>
    <property type="evidence" value="ECO:0000314"/>
    <property type="project" value="TAIR"/>
</dbReference>
<dbReference type="GO" id="GO:0005634">
    <property type="term" value="C:nucleus"/>
    <property type="evidence" value="ECO:0007005"/>
    <property type="project" value="TAIR"/>
</dbReference>
<dbReference type="GO" id="GO:0048471">
    <property type="term" value="C:perinuclear region of cytoplasm"/>
    <property type="evidence" value="ECO:0000314"/>
    <property type="project" value="UniProtKB"/>
</dbReference>
<dbReference type="GO" id="GO:0005886">
    <property type="term" value="C:plasma membrane"/>
    <property type="evidence" value="ECO:0000314"/>
    <property type="project" value="TAIR"/>
</dbReference>
<dbReference type="GO" id="GO:0098797">
    <property type="term" value="C:plasma membrane protein complex"/>
    <property type="evidence" value="ECO:0000314"/>
    <property type="project" value="TAIR"/>
</dbReference>
<dbReference type="GO" id="GO:0009506">
    <property type="term" value="C:plasmodesma"/>
    <property type="evidence" value="ECO:0007005"/>
    <property type="project" value="TAIR"/>
</dbReference>
<dbReference type="GO" id="GO:0004430">
    <property type="term" value="F:1-phosphatidylinositol 4-kinase activity"/>
    <property type="evidence" value="ECO:0000314"/>
    <property type="project" value="UniProtKB"/>
</dbReference>
<dbReference type="GO" id="GO:0051015">
    <property type="term" value="F:actin filament binding"/>
    <property type="evidence" value="ECO:0000314"/>
    <property type="project" value="UniProtKB"/>
</dbReference>
<dbReference type="GO" id="GO:0001727">
    <property type="term" value="F:lipid kinase activity"/>
    <property type="evidence" value="ECO:0000314"/>
    <property type="project" value="TAIR"/>
</dbReference>
<dbReference type="GO" id="GO:0070300">
    <property type="term" value="F:phosphatidic acid binding"/>
    <property type="evidence" value="ECO:0000314"/>
    <property type="project" value="UniProtKB"/>
</dbReference>
<dbReference type="GO" id="GO:0005546">
    <property type="term" value="F:phosphatidylinositol-4,5-bisphosphate binding"/>
    <property type="evidence" value="ECO:0000314"/>
    <property type="project" value="UniProtKB"/>
</dbReference>
<dbReference type="GO" id="GO:0070273">
    <property type="term" value="F:phosphatidylinositol-4-phosphate binding"/>
    <property type="evidence" value="ECO:0000314"/>
    <property type="project" value="UniProtKB"/>
</dbReference>
<dbReference type="GO" id="GO:0046854">
    <property type="term" value="P:phosphatidylinositol phosphate biosynthetic process"/>
    <property type="evidence" value="ECO:0007669"/>
    <property type="project" value="InterPro"/>
</dbReference>
<dbReference type="GO" id="GO:0009555">
    <property type="term" value="P:pollen development"/>
    <property type="evidence" value="ECO:0000315"/>
    <property type="project" value="TAIR"/>
</dbReference>
<dbReference type="GO" id="GO:0006468">
    <property type="term" value="P:protein phosphorylation"/>
    <property type="evidence" value="ECO:0000314"/>
    <property type="project" value="TAIR"/>
</dbReference>
<dbReference type="GO" id="GO:0048831">
    <property type="term" value="P:regulation of shoot system development"/>
    <property type="evidence" value="ECO:0000315"/>
    <property type="project" value="TAIR"/>
</dbReference>
<dbReference type="GO" id="GO:0048364">
    <property type="term" value="P:root development"/>
    <property type="evidence" value="ECO:0000315"/>
    <property type="project" value="TAIR"/>
</dbReference>
<dbReference type="CDD" id="cd05167">
    <property type="entry name" value="PI4Kc_III_alpha"/>
    <property type="match status" value="1"/>
</dbReference>
<dbReference type="FunFam" id="1.10.1070.11:FF:000012">
    <property type="entry name" value="Phosphatidylinositol 4-kinase alpha 1"/>
    <property type="match status" value="1"/>
</dbReference>
<dbReference type="FunFam" id="1.25.40.70:FF:000013">
    <property type="entry name" value="Phosphatidylinositol 4-kinase alpha 1"/>
    <property type="match status" value="1"/>
</dbReference>
<dbReference type="FunFam" id="3.30.1010.10:FF:000012">
    <property type="entry name" value="Phosphatidylinositol 4-kinase alpha 1"/>
    <property type="match status" value="1"/>
</dbReference>
<dbReference type="Gene3D" id="1.10.1070.11">
    <property type="entry name" value="Phosphatidylinositol 3-/4-kinase, catalytic domain"/>
    <property type="match status" value="1"/>
</dbReference>
<dbReference type="Gene3D" id="3.30.1010.10">
    <property type="entry name" value="Phosphatidylinositol 3-kinase Catalytic Subunit, Chain A, domain 4"/>
    <property type="match status" value="1"/>
</dbReference>
<dbReference type="Gene3D" id="1.25.40.70">
    <property type="entry name" value="Phosphatidylinositol 3-kinase, accessory domain (PIK)"/>
    <property type="match status" value="1"/>
</dbReference>
<dbReference type="InterPro" id="IPR016024">
    <property type="entry name" value="ARM-type_fold"/>
</dbReference>
<dbReference type="InterPro" id="IPR011009">
    <property type="entry name" value="Kinase-like_dom_sf"/>
</dbReference>
<dbReference type="InterPro" id="IPR000403">
    <property type="entry name" value="PI3/4_kinase_cat_dom"/>
</dbReference>
<dbReference type="InterPro" id="IPR036940">
    <property type="entry name" value="PI3/4_kinase_cat_sf"/>
</dbReference>
<dbReference type="InterPro" id="IPR018936">
    <property type="entry name" value="PI3/4_kinase_CS"/>
</dbReference>
<dbReference type="InterPro" id="IPR001263">
    <property type="entry name" value="PI3K_accessory_dom"/>
</dbReference>
<dbReference type="InterPro" id="IPR042236">
    <property type="entry name" value="PI3K_accessory_sf"/>
</dbReference>
<dbReference type="InterPro" id="IPR045495">
    <property type="entry name" value="PI4K_N"/>
</dbReference>
<dbReference type="InterPro" id="IPR015433">
    <property type="entry name" value="PI_Kinase"/>
</dbReference>
<dbReference type="PANTHER" id="PTHR10048:SF15">
    <property type="entry name" value="PHOSPHATIDYLINOSITOL 4-KINASE ALPHA"/>
    <property type="match status" value="1"/>
</dbReference>
<dbReference type="PANTHER" id="PTHR10048">
    <property type="entry name" value="PHOSPHATIDYLINOSITOL KINASE"/>
    <property type="match status" value="1"/>
</dbReference>
<dbReference type="Pfam" id="PF00454">
    <property type="entry name" value="PI3_PI4_kinase"/>
    <property type="match status" value="1"/>
</dbReference>
<dbReference type="Pfam" id="PF00613">
    <property type="entry name" value="PI3Ka"/>
    <property type="match status" value="1"/>
</dbReference>
<dbReference type="Pfam" id="PF19274">
    <property type="entry name" value="PI4K_N"/>
    <property type="match status" value="1"/>
</dbReference>
<dbReference type="SMART" id="SM00145">
    <property type="entry name" value="PI3Ka"/>
    <property type="match status" value="1"/>
</dbReference>
<dbReference type="SMART" id="SM00146">
    <property type="entry name" value="PI3Kc"/>
    <property type="match status" value="1"/>
</dbReference>
<dbReference type="SUPFAM" id="SSF48371">
    <property type="entry name" value="ARM repeat"/>
    <property type="match status" value="2"/>
</dbReference>
<dbReference type="SUPFAM" id="SSF56112">
    <property type="entry name" value="Protein kinase-like (PK-like)"/>
    <property type="match status" value="1"/>
</dbReference>
<dbReference type="PROSITE" id="PS00915">
    <property type="entry name" value="PI3_4_KINASE_1"/>
    <property type="match status" value="1"/>
</dbReference>
<dbReference type="PROSITE" id="PS50290">
    <property type="entry name" value="PI3_4_KINASE_3"/>
    <property type="match status" value="1"/>
</dbReference>
<dbReference type="PROSITE" id="PS51545">
    <property type="entry name" value="PIK_HELICAL"/>
    <property type="match status" value="1"/>
</dbReference>
<gene>
    <name evidence="9" type="primary">PI4KA1</name>
    <name evidence="8" type="synonym">PI4KALPHA</name>
    <name evidence="7" type="synonym">PI4KALPHA1</name>
    <name evidence="11" type="ordered locus">At1g49340</name>
    <name evidence="12" type="ORF">F13F21.23</name>
</gene>
<keyword id="KW-0963">Cytoplasm</keyword>
<keyword id="KW-0418">Kinase</keyword>
<keyword id="KW-0472">Membrane</keyword>
<keyword id="KW-1185">Reference proteome</keyword>
<keyword id="KW-0808">Transferase</keyword>
<proteinExistence type="evidence at protein level"/>
<evidence type="ECO:0000255" key="1">
    <source>
        <dbReference type="PROSITE-ProRule" id="PRU00269"/>
    </source>
</evidence>
<evidence type="ECO:0000255" key="2">
    <source>
        <dbReference type="PROSITE-ProRule" id="PRU00878"/>
    </source>
</evidence>
<evidence type="ECO:0000256" key="3">
    <source>
        <dbReference type="SAM" id="MobiDB-lite"/>
    </source>
</evidence>
<evidence type="ECO:0000269" key="4">
    <source>
    </source>
</evidence>
<evidence type="ECO:0000269" key="5">
    <source>
    </source>
</evidence>
<evidence type="ECO:0000269" key="6">
    <source>
    </source>
</evidence>
<evidence type="ECO:0000303" key="7">
    <source>
    </source>
</evidence>
<evidence type="ECO:0000303" key="8">
    <source>
    </source>
</evidence>
<evidence type="ECO:0000305" key="9"/>
<evidence type="ECO:0000305" key="10">
    <source>
    </source>
</evidence>
<evidence type="ECO:0000312" key="11">
    <source>
        <dbReference type="Araport" id="AT1G49340"/>
    </source>
</evidence>
<evidence type="ECO:0000312" key="12">
    <source>
        <dbReference type="EMBL" id="AAD43164.1"/>
    </source>
</evidence>
<comment type="function">
    <text evidence="5 6 10">Acts on phosphatidylinositol (PtdIns) in the first committed step in the production of the second messenger inositol-1,4,5,-trisphosphate (Probable). Can bind to phosphatidylinositol 4-monophosphate (PI-4-P or PtdIns4P), phosphatidylinositol 4,5-bisphosphate (PI-4,5-P2 or PtdIns4,5P2), and phosphatidic acid (PtdOH), but not to 3-phosphoinositides (PubMed:9712908). May function upstream of the cold response phosphoinositide-dependent phospholipase C (PI-PLC) pathway (PubMed:22318862).</text>
</comment>
<comment type="catalytic activity">
    <reaction evidence="4">
        <text>a 1,2-diacyl-sn-glycero-3-phospho-(1D-myo-inositol) + ATP = a 1,2-diacyl-sn-glycero-3-phospho-(1D-myo-inositol 4-phosphate) + ADP + H(+)</text>
        <dbReference type="Rhea" id="RHEA:19877"/>
        <dbReference type="ChEBI" id="CHEBI:15378"/>
        <dbReference type="ChEBI" id="CHEBI:30616"/>
        <dbReference type="ChEBI" id="CHEBI:57880"/>
        <dbReference type="ChEBI" id="CHEBI:58178"/>
        <dbReference type="ChEBI" id="CHEBI:456216"/>
        <dbReference type="EC" id="2.7.1.67"/>
    </reaction>
    <physiologicalReaction direction="left-to-right" evidence="4">
        <dbReference type="Rhea" id="RHEA:19878"/>
    </physiologicalReaction>
</comment>
<comment type="activity regulation">
    <text evidence="4">Repressed by PtdIns4P, adenosine and wortmannin, but stimulated by other negatively charged lipids such as PtdIns3P, PtdOH, and phosphatidyl-serine (PtdSer).</text>
</comment>
<comment type="subunit">
    <text evidence="4">Interacts in vitro with actin filaments via its PH domain.</text>
</comment>
<comment type="subcellular location">
    <subcellularLocation>
        <location evidence="4">Membrane</location>
        <topology evidence="4">Peripheral membrane protein</topology>
        <orientation evidence="4">Cytoplasmic side</orientation>
    </subcellularLocation>
    <subcellularLocation>
        <location evidence="4">Cytoplasm</location>
        <location evidence="4">Perinuclear region</location>
    </subcellularLocation>
</comment>
<comment type="tissue specificity">
    <text evidence="6">Present in leaves and inflorescences.</text>
</comment>
<comment type="disruption phenotype">
    <text evidence="5">Lethal.</text>
</comment>
<comment type="similarity">
    <text evidence="9">Belongs to the PI3/PI4-kinase family. Type III PI4K subfamily.</text>
</comment>
<comment type="sequence caution" evidence="9">
    <conflict type="erroneous gene model prediction">
        <sequence resource="EMBL-CDS" id="AAD43164"/>
    </conflict>
</comment>